<proteinExistence type="evidence at protein level"/>
<feature type="transit peptide" description="Chloroplast" evidence="1">
    <location>
        <begin position="1"/>
        <end status="unknown"/>
    </location>
</feature>
<feature type="transit peptide" description="Thylakoid" evidence="3">
    <location>
        <begin status="unknown"/>
        <end position="79"/>
    </location>
</feature>
<feature type="chain" id="PRO_0000311681" description="PsbP domain-containing protein 5, chloroplastic">
    <location>
        <begin position="80"/>
        <end position="297"/>
    </location>
</feature>
<reference evidence="9" key="1">
    <citation type="journal article" date="2000" name="Nature">
        <title>Sequence and analysis of chromosome 5 of the plant Arabidopsis thaliana.</title>
        <authorList>
            <person name="Tabata S."/>
            <person name="Kaneko T."/>
            <person name="Nakamura Y."/>
            <person name="Kotani H."/>
            <person name="Kato T."/>
            <person name="Asamizu E."/>
            <person name="Miyajima N."/>
            <person name="Sasamoto S."/>
            <person name="Kimura T."/>
            <person name="Hosouchi T."/>
            <person name="Kawashima K."/>
            <person name="Kohara M."/>
            <person name="Matsumoto M."/>
            <person name="Matsuno A."/>
            <person name="Muraki A."/>
            <person name="Nakayama S."/>
            <person name="Nakazaki N."/>
            <person name="Naruo K."/>
            <person name="Okumura S."/>
            <person name="Shinpo S."/>
            <person name="Takeuchi C."/>
            <person name="Wada T."/>
            <person name="Watanabe A."/>
            <person name="Yamada M."/>
            <person name="Yasuda M."/>
            <person name="Sato S."/>
            <person name="de la Bastide M."/>
            <person name="Huang E."/>
            <person name="Spiegel L."/>
            <person name="Gnoj L."/>
            <person name="O'Shaughnessy A."/>
            <person name="Preston R."/>
            <person name="Habermann K."/>
            <person name="Murray J."/>
            <person name="Johnson D."/>
            <person name="Rohlfing T."/>
            <person name="Nelson J."/>
            <person name="Stoneking T."/>
            <person name="Pepin K."/>
            <person name="Spieth J."/>
            <person name="Sekhon M."/>
            <person name="Armstrong J."/>
            <person name="Becker M."/>
            <person name="Belter E."/>
            <person name="Cordum H."/>
            <person name="Cordes M."/>
            <person name="Courtney L."/>
            <person name="Courtney W."/>
            <person name="Dante M."/>
            <person name="Du H."/>
            <person name="Edwards J."/>
            <person name="Fryman J."/>
            <person name="Haakensen B."/>
            <person name="Lamar E."/>
            <person name="Latreille P."/>
            <person name="Leonard S."/>
            <person name="Meyer R."/>
            <person name="Mulvaney E."/>
            <person name="Ozersky P."/>
            <person name="Riley A."/>
            <person name="Strowmatt C."/>
            <person name="Wagner-McPherson C."/>
            <person name="Wollam A."/>
            <person name="Yoakum M."/>
            <person name="Bell M."/>
            <person name="Dedhia N."/>
            <person name="Parnell L."/>
            <person name="Shah R."/>
            <person name="Rodriguez M."/>
            <person name="Hoon See L."/>
            <person name="Vil D."/>
            <person name="Baker J."/>
            <person name="Kirchoff K."/>
            <person name="Toth K."/>
            <person name="King L."/>
            <person name="Bahret A."/>
            <person name="Miller B."/>
            <person name="Marra M.A."/>
            <person name="Martienssen R."/>
            <person name="McCombie W.R."/>
            <person name="Wilson R.K."/>
            <person name="Murphy G."/>
            <person name="Bancroft I."/>
            <person name="Volckaert G."/>
            <person name="Wambutt R."/>
            <person name="Duesterhoeft A."/>
            <person name="Stiekema W."/>
            <person name="Pohl T."/>
            <person name="Entian K.-D."/>
            <person name="Terryn N."/>
            <person name="Hartley N."/>
            <person name="Bent E."/>
            <person name="Johnson S."/>
            <person name="Langham S.-A."/>
            <person name="McCullagh B."/>
            <person name="Robben J."/>
            <person name="Grymonprez B."/>
            <person name="Zimmermann W."/>
            <person name="Ramsperger U."/>
            <person name="Wedler H."/>
            <person name="Balke K."/>
            <person name="Wedler E."/>
            <person name="Peters S."/>
            <person name="van Staveren M."/>
            <person name="Dirkse W."/>
            <person name="Mooijman P."/>
            <person name="Klein Lankhorst R."/>
            <person name="Weitzenegger T."/>
            <person name="Bothe G."/>
            <person name="Rose M."/>
            <person name="Hauf J."/>
            <person name="Berneiser S."/>
            <person name="Hempel S."/>
            <person name="Feldpausch M."/>
            <person name="Lamberth S."/>
            <person name="Villarroel R."/>
            <person name="Gielen J."/>
            <person name="Ardiles W."/>
            <person name="Bents O."/>
            <person name="Lemcke K."/>
            <person name="Kolesov G."/>
            <person name="Mayer K.F.X."/>
            <person name="Rudd S."/>
            <person name="Schoof H."/>
            <person name="Schueller C."/>
            <person name="Zaccaria P."/>
            <person name="Mewes H.-W."/>
            <person name="Bevan M."/>
            <person name="Fransz P.F."/>
        </authorList>
    </citation>
    <scope>NUCLEOTIDE SEQUENCE [LARGE SCALE GENOMIC DNA]</scope>
    <source>
        <strain evidence="2">cv. Columbia</strain>
    </source>
</reference>
<reference key="2">
    <citation type="journal article" date="2017" name="Plant J.">
        <title>Araport11: a complete reannotation of the Arabidopsis thaliana reference genome.</title>
        <authorList>
            <person name="Cheng C.Y."/>
            <person name="Krishnakumar V."/>
            <person name="Chan A.P."/>
            <person name="Thibaud-Nissen F."/>
            <person name="Schobel S."/>
            <person name="Town C.D."/>
        </authorList>
    </citation>
    <scope>GENOME REANNOTATION</scope>
    <source>
        <strain>cv. Columbia</strain>
    </source>
</reference>
<reference evidence="8" key="3">
    <citation type="journal article" date="2003" name="Science">
        <title>Empirical analysis of transcriptional activity in the Arabidopsis genome.</title>
        <authorList>
            <person name="Yamada K."/>
            <person name="Lim J."/>
            <person name="Dale J.M."/>
            <person name="Chen H."/>
            <person name="Shinn P."/>
            <person name="Palm C.J."/>
            <person name="Southwick A.M."/>
            <person name="Wu H.C."/>
            <person name="Kim C.J."/>
            <person name="Nguyen M."/>
            <person name="Pham P.K."/>
            <person name="Cheuk R.F."/>
            <person name="Karlin-Newmann G."/>
            <person name="Liu S.X."/>
            <person name="Lam B."/>
            <person name="Sakano H."/>
            <person name="Wu T."/>
            <person name="Yu G."/>
            <person name="Miranda M."/>
            <person name="Quach H.L."/>
            <person name="Tripp M."/>
            <person name="Chang C.H."/>
            <person name="Lee J.M."/>
            <person name="Toriumi M.J."/>
            <person name="Chan M.M."/>
            <person name="Tang C.C."/>
            <person name="Onodera C.S."/>
            <person name="Deng J.M."/>
            <person name="Akiyama K."/>
            <person name="Ansari Y."/>
            <person name="Arakawa T."/>
            <person name="Banh J."/>
            <person name="Banno F."/>
            <person name="Bowser L."/>
            <person name="Brooks S.Y."/>
            <person name="Carninci P."/>
            <person name="Chao Q."/>
            <person name="Choy N."/>
            <person name="Enju A."/>
            <person name="Goldsmith A.D."/>
            <person name="Gurjal M."/>
            <person name="Hansen N.F."/>
            <person name="Hayashizaki Y."/>
            <person name="Johnson-Hopson C."/>
            <person name="Hsuan V.W."/>
            <person name="Iida K."/>
            <person name="Karnes M."/>
            <person name="Khan S."/>
            <person name="Koesema E."/>
            <person name="Ishida J."/>
            <person name="Jiang P.X."/>
            <person name="Jones T."/>
            <person name="Kawai J."/>
            <person name="Kamiya A."/>
            <person name="Meyers C."/>
            <person name="Nakajima M."/>
            <person name="Narusaka M."/>
            <person name="Seki M."/>
            <person name="Sakurai T."/>
            <person name="Satou M."/>
            <person name="Tamse R."/>
            <person name="Vaysberg M."/>
            <person name="Wallender E.K."/>
            <person name="Wong C."/>
            <person name="Yamamura Y."/>
            <person name="Yuan S."/>
            <person name="Shinozaki K."/>
            <person name="Davis R.W."/>
            <person name="Theologis A."/>
            <person name="Ecker J.R."/>
        </authorList>
    </citation>
    <scope>NUCLEOTIDE SEQUENCE [LARGE SCALE MRNA]</scope>
    <source>
        <strain evidence="4">cv. Columbia</strain>
    </source>
</reference>
<reference evidence="7" key="4">
    <citation type="journal article" date="2002" name="J. Biol. Chem.">
        <title>Proteome map of the chloroplast lumen of Arabidopsis thaliana.</title>
        <authorList>
            <person name="Schubert M."/>
            <person name="Petersson U.A."/>
            <person name="Haas B.J."/>
            <person name="Funk C."/>
            <person name="Schroeder W.P."/>
            <person name="Kieselbach T."/>
        </authorList>
    </citation>
    <scope>PROTEIN SEQUENCE OF 80-99</scope>
    <scope>SUBCELLULAR LOCATION</scope>
    <source>
        <strain evidence="3">cv. Columbia</strain>
    </source>
</reference>
<reference key="5">
    <citation type="journal article" date="2007" name="Plant Physiol.">
        <title>Distinct functions for the two PsbP-like proteins PPL1 and PPL2 in the chloroplast thylakoid lumen of Arabidopsis.</title>
        <authorList>
            <person name="Ishihara S."/>
            <person name="Takabayashi A."/>
            <person name="Ido K."/>
            <person name="Endo T."/>
            <person name="Ifuku K."/>
            <person name="Sato F."/>
        </authorList>
    </citation>
    <scope>GENE FAMILY</scope>
    <scope>NOMENCLATURE</scope>
</reference>
<reference key="6">
    <citation type="journal article" date="2008" name="PLoS ONE">
        <title>Sorting signals, N-terminal modifications and abundance of the chloroplast proteome.</title>
        <authorList>
            <person name="Zybailov B."/>
            <person name="Rutschow H."/>
            <person name="Friso G."/>
            <person name="Rudella A."/>
            <person name="Emanuelsson O."/>
            <person name="Sun Q."/>
            <person name="van Wijk K.J."/>
        </authorList>
    </citation>
    <scope>IDENTIFICATION BY MASS SPECTROMETRY</scope>
    <scope>SUBCELLULAR LOCATION [LARGE SCALE ANALYSIS]</scope>
</reference>
<reference key="7">
    <citation type="journal article" date="2011" name="PLoS ONE">
        <title>Developmental defects in mutants of the PsbP domain protein 5 in Arabidopsis thaliana.</title>
        <authorList>
            <person name="Roose J.L."/>
            <person name="Frankel L.K."/>
            <person name="Bricker T.M."/>
        </authorList>
    </citation>
    <scope>FUNCTION</scope>
    <scope>DISRUPTION PHENOTYPE</scope>
    <source>
        <strain>cv. Columbia</strain>
    </source>
</reference>
<gene>
    <name type="primary">PPD5</name>
    <name type="ordered locus">At5g11450</name>
    <name type="ORF">F15N18.40</name>
</gene>
<organism>
    <name type="scientific">Arabidopsis thaliana</name>
    <name type="common">Mouse-ear cress</name>
    <dbReference type="NCBI Taxonomy" id="3702"/>
    <lineage>
        <taxon>Eukaryota</taxon>
        <taxon>Viridiplantae</taxon>
        <taxon>Streptophyta</taxon>
        <taxon>Embryophyta</taxon>
        <taxon>Tracheophyta</taxon>
        <taxon>Spermatophyta</taxon>
        <taxon>Magnoliopsida</taxon>
        <taxon>eudicotyledons</taxon>
        <taxon>Gunneridae</taxon>
        <taxon>Pentapetalae</taxon>
        <taxon>rosids</taxon>
        <taxon>malvids</taxon>
        <taxon>Brassicales</taxon>
        <taxon>Brassicaceae</taxon>
        <taxon>Camelineae</taxon>
        <taxon>Arabidopsis</taxon>
    </lineage>
</organism>
<accession>P82715</accession>
<accession>Q8VY65</accession>
<sequence>MALLCPSLPSPNSRLFRCRSSNISSKYHGASKELMIARSGVSTRSISSEKGLSRRDLVLIGLSSPLSMFLPLSSPVTHAEEDVKMSGEELKMGTMVDDINAYSYAYPLDYPSEKLVFKWVESRKPERYSSAAPLSPDARLRIVSERVDLTDNLVISISIGPPNSRLTSKEKKTWSAKEVADSVLSDKSALRVTSSQRLEESSVLDAHASDIDGEPYWYYEYLVRKSPTKIAEASKLYRHYISSTAERDGYLYTINASTLGKQWDKMGPVLERAVGSFRLLPPTDSYVPPYKDPWRFW</sequence>
<keyword id="KW-0150">Chloroplast</keyword>
<keyword id="KW-0903">Direct protein sequencing</keyword>
<keyword id="KW-0934">Plastid</keyword>
<keyword id="KW-1185">Reference proteome</keyword>
<keyword id="KW-0793">Thylakoid</keyword>
<keyword id="KW-0809">Transit peptide</keyword>
<name>PPD5_ARATH</name>
<comment type="function">
    <text evidence="6">Involved in strigolactone biosynthesis.</text>
</comment>
<comment type="subcellular location">
    <subcellularLocation>
        <location evidence="3 5">Plastid</location>
        <location evidence="3 5">Chloroplast thylakoid lumen</location>
    </subcellularLocation>
</comment>
<comment type="disruption phenotype">
    <text evidence="6">Smaller plants and frequent morphological defects, including increased lateral root branching, aerial rosettes and multiple rosettes. No effect on photosystem II and linear photosynthetic electron transfer.</text>
</comment>
<comment type="similarity">
    <text evidence="7">Belongs to the PsbP family.</text>
</comment>
<comment type="sequence caution" evidence="7">
    <conflict type="erroneous gene model prediction">
        <sequence resource="EMBL-CDS" id="CAB87705"/>
    </conflict>
</comment>
<protein>
    <recommendedName>
        <fullName>PsbP domain-containing protein 5, chloroplastic</fullName>
    </recommendedName>
    <alternativeName>
        <fullName>OEC23-like protein 6</fullName>
    </alternativeName>
    <alternativeName>
        <fullName>PsbP-related thylakoid lumenal protein 4</fullName>
    </alternativeName>
    <alternativeName>
        <fullName>Thylakoid lumenal 35.8 kDa protein</fullName>
    </alternativeName>
</protein>
<dbReference type="EMBL" id="AL163815">
    <property type="protein sequence ID" value="CAB87705.1"/>
    <property type="status" value="ALT_SEQ"/>
    <property type="molecule type" value="Genomic_DNA"/>
</dbReference>
<dbReference type="EMBL" id="CP002688">
    <property type="protein sequence ID" value="AED91681.1"/>
    <property type="molecule type" value="Genomic_DNA"/>
</dbReference>
<dbReference type="EMBL" id="AY072412">
    <property type="protein sequence ID" value="AAL62404.1"/>
    <property type="molecule type" value="mRNA"/>
</dbReference>
<dbReference type="EMBL" id="AY114705">
    <property type="protein sequence ID" value="AAM48024.1"/>
    <property type="molecule type" value="mRNA"/>
</dbReference>
<dbReference type="PIR" id="T48504">
    <property type="entry name" value="T48504"/>
</dbReference>
<dbReference type="RefSeq" id="NP_196706.2">
    <property type="nucleotide sequence ID" value="NM_121183.5"/>
</dbReference>
<dbReference type="SMR" id="P82715"/>
<dbReference type="BioGRID" id="16294">
    <property type="interactions" value="4"/>
</dbReference>
<dbReference type="FunCoup" id="P82715">
    <property type="interactions" value="1496"/>
</dbReference>
<dbReference type="IntAct" id="P82715">
    <property type="interactions" value="4"/>
</dbReference>
<dbReference type="STRING" id="3702.P82715"/>
<dbReference type="PaxDb" id="3702-AT5G11450.1"/>
<dbReference type="ProteomicsDB" id="249339"/>
<dbReference type="EnsemblPlants" id="AT5G11450.1">
    <property type="protein sequence ID" value="AT5G11450.1"/>
    <property type="gene ID" value="AT5G11450"/>
</dbReference>
<dbReference type="GeneID" id="831016"/>
<dbReference type="Gramene" id="AT5G11450.1">
    <property type="protein sequence ID" value="AT5G11450.1"/>
    <property type="gene ID" value="AT5G11450"/>
</dbReference>
<dbReference type="KEGG" id="ath:AT5G11450"/>
<dbReference type="Araport" id="AT5G11450"/>
<dbReference type="TAIR" id="AT5G11450">
    <property type="gene designation" value="PPD5"/>
</dbReference>
<dbReference type="eggNOG" id="ENOG502QTGE">
    <property type="taxonomic scope" value="Eukaryota"/>
</dbReference>
<dbReference type="HOGENOM" id="CLU_071423_0_0_1"/>
<dbReference type="InParanoid" id="P82715"/>
<dbReference type="OrthoDB" id="1903117at2759"/>
<dbReference type="PhylomeDB" id="P82715"/>
<dbReference type="BioCyc" id="MetaCyc:AT5G11450-MONOMER"/>
<dbReference type="PRO" id="PR:P82715"/>
<dbReference type="Proteomes" id="UP000006548">
    <property type="component" value="Chromosome 5"/>
</dbReference>
<dbReference type="ExpressionAtlas" id="P82715">
    <property type="expression patterns" value="baseline and differential"/>
</dbReference>
<dbReference type="GO" id="GO:0009507">
    <property type="term" value="C:chloroplast"/>
    <property type="evidence" value="ECO:0007005"/>
    <property type="project" value="TAIR"/>
</dbReference>
<dbReference type="GO" id="GO:0009543">
    <property type="term" value="C:chloroplast thylakoid lumen"/>
    <property type="evidence" value="ECO:0007669"/>
    <property type="project" value="UniProtKB-SubCell"/>
</dbReference>
<dbReference type="GO" id="GO:0009535">
    <property type="term" value="C:chloroplast thylakoid membrane"/>
    <property type="evidence" value="ECO:0007005"/>
    <property type="project" value="TAIR"/>
</dbReference>
<dbReference type="GO" id="GO:0019898">
    <property type="term" value="C:extrinsic component of membrane"/>
    <property type="evidence" value="ECO:0007669"/>
    <property type="project" value="InterPro"/>
</dbReference>
<dbReference type="GO" id="GO:0009654">
    <property type="term" value="C:photosystem II oxygen evolving complex"/>
    <property type="evidence" value="ECO:0007669"/>
    <property type="project" value="InterPro"/>
</dbReference>
<dbReference type="GO" id="GO:0005886">
    <property type="term" value="C:plasma membrane"/>
    <property type="evidence" value="ECO:0007005"/>
    <property type="project" value="TAIR"/>
</dbReference>
<dbReference type="GO" id="GO:0009579">
    <property type="term" value="C:thylakoid"/>
    <property type="evidence" value="ECO:0007005"/>
    <property type="project" value="TAIR"/>
</dbReference>
<dbReference type="GO" id="GO:0031977">
    <property type="term" value="C:thylakoid lumen"/>
    <property type="evidence" value="ECO:0007005"/>
    <property type="project" value="TAIR"/>
</dbReference>
<dbReference type="GO" id="GO:0005509">
    <property type="term" value="F:calcium ion binding"/>
    <property type="evidence" value="ECO:0007669"/>
    <property type="project" value="InterPro"/>
</dbReference>
<dbReference type="GO" id="GO:0015979">
    <property type="term" value="P:photosynthesis"/>
    <property type="evidence" value="ECO:0007669"/>
    <property type="project" value="InterPro"/>
</dbReference>
<dbReference type="Gene3D" id="3.40.1000.10">
    <property type="entry name" value="Mog1/PsbP, alpha/beta/alpha sandwich"/>
    <property type="match status" value="1"/>
</dbReference>
<dbReference type="InterPro" id="IPR016123">
    <property type="entry name" value="Mog1/PsbP_a/b/a-sand"/>
</dbReference>
<dbReference type="InterPro" id="IPR002683">
    <property type="entry name" value="PsbP_C"/>
</dbReference>
<dbReference type="PANTHER" id="PTHR31407">
    <property type="match status" value="1"/>
</dbReference>
<dbReference type="PANTHER" id="PTHR31407:SF7">
    <property type="entry name" value="PSBP DOMAIN-CONTAINING PROTEIN 5, CHLOROPLASTIC"/>
    <property type="match status" value="1"/>
</dbReference>
<dbReference type="Pfam" id="PF01789">
    <property type="entry name" value="PsbP"/>
    <property type="match status" value="1"/>
</dbReference>
<dbReference type="SUPFAM" id="SSF55724">
    <property type="entry name" value="Mog1p/PsbP-like"/>
    <property type="match status" value="1"/>
</dbReference>
<evidence type="ECO:0000255" key="1"/>
<evidence type="ECO:0000269" key="2">
    <source>
    </source>
</evidence>
<evidence type="ECO:0000269" key="3">
    <source>
    </source>
</evidence>
<evidence type="ECO:0000269" key="4">
    <source>
    </source>
</evidence>
<evidence type="ECO:0000269" key="5">
    <source>
    </source>
</evidence>
<evidence type="ECO:0000269" key="6">
    <source>
    </source>
</evidence>
<evidence type="ECO:0000305" key="7"/>
<evidence type="ECO:0000312" key="8">
    <source>
        <dbReference type="EMBL" id="AAL62404.1"/>
    </source>
</evidence>
<evidence type="ECO:0000312" key="9">
    <source>
        <dbReference type="EMBL" id="CAB87705.1"/>
    </source>
</evidence>